<name>RSGA_YERPB</name>
<keyword id="KW-0963">Cytoplasm</keyword>
<keyword id="KW-0342">GTP-binding</keyword>
<keyword id="KW-0378">Hydrolase</keyword>
<keyword id="KW-0479">Metal-binding</keyword>
<keyword id="KW-0547">Nucleotide-binding</keyword>
<keyword id="KW-0690">Ribosome biogenesis</keyword>
<keyword id="KW-0694">RNA-binding</keyword>
<keyword id="KW-0699">rRNA-binding</keyword>
<keyword id="KW-0862">Zinc</keyword>
<reference key="1">
    <citation type="submission" date="2008-04" db="EMBL/GenBank/DDBJ databases">
        <title>Complete sequence of Yersinia pseudotuberculosis PB1/+.</title>
        <authorList>
            <person name="Copeland A."/>
            <person name="Lucas S."/>
            <person name="Lapidus A."/>
            <person name="Glavina del Rio T."/>
            <person name="Dalin E."/>
            <person name="Tice H."/>
            <person name="Bruce D."/>
            <person name="Goodwin L."/>
            <person name="Pitluck S."/>
            <person name="Munk A.C."/>
            <person name="Brettin T."/>
            <person name="Detter J.C."/>
            <person name="Han C."/>
            <person name="Tapia R."/>
            <person name="Schmutz J."/>
            <person name="Larimer F."/>
            <person name="Land M."/>
            <person name="Hauser L."/>
            <person name="Challacombe J.F."/>
            <person name="Green L."/>
            <person name="Lindler L.E."/>
            <person name="Nikolich M.P."/>
            <person name="Richardson P."/>
        </authorList>
    </citation>
    <scope>NUCLEOTIDE SEQUENCE [LARGE SCALE GENOMIC DNA]</scope>
    <source>
        <strain>PB1/+</strain>
    </source>
</reference>
<organism>
    <name type="scientific">Yersinia pseudotuberculosis serotype IB (strain PB1/+)</name>
    <dbReference type="NCBI Taxonomy" id="502801"/>
    <lineage>
        <taxon>Bacteria</taxon>
        <taxon>Pseudomonadati</taxon>
        <taxon>Pseudomonadota</taxon>
        <taxon>Gammaproteobacteria</taxon>
        <taxon>Enterobacterales</taxon>
        <taxon>Yersiniaceae</taxon>
        <taxon>Yersinia</taxon>
    </lineage>
</organism>
<dbReference type="EC" id="3.6.1.-" evidence="1"/>
<dbReference type="EMBL" id="CP001048">
    <property type="protein sequence ID" value="ACC87431.1"/>
    <property type="molecule type" value="Genomic_DNA"/>
</dbReference>
<dbReference type="RefSeq" id="WP_002209142.1">
    <property type="nucleotide sequence ID" value="NZ_CP009780.1"/>
</dbReference>
<dbReference type="SMR" id="B2K1Z6"/>
<dbReference type="GeneID" id="57974243"/>
<dbReference type="KEGG" id="ypb:YPTS_0443"/>
<dbReference type="PATRIC" id="fig|502801.10.peg.4119"/>
<dbReference type="GO" id="GO:0005737">
    <property type="term" value="C:cytoplasm"/>
    <property type="evidence" value="ECO:0007669"/>
    <property type="project" value="UniProtKB-SubCell"/>
</dbReference>
<dbReference type="GO" id="GO:0005525">
    <property type="term" value="F:GTP binding"/>
    <property type="evidence" value="ECO:0007669"/>
    <property type="project" value="UniProtKB-UniRule"/>
</dbReference>
<dbReference type="GO" id="GO:0003924">
    <property type="term" value="F:GTPase activity"/>
    <property type="evidence" value="ECO:0007669"/>
    <property type="project" value="UniProtKB-UniRule"/>
</dbReference>
<dbReference type="GO" id="GO:0046872">
    <property type="term" value="F:metal ion binding"/>
    <property type="evidence" value="ECO:0007669"/>
    <property type="project" value="UniProtKB-KW"/>
</dbReference>
<dbReference type="GO" id="GO:0019843">
    <property type="term" value="F:rRNA binding"/>
    <property type="evidence" value="ECO:0007669"/>
    <property type="project" value="UniProtKB-KW"/>
</dbReference>
<dbReference type="GO" id="GO:0042274">
    <property type="term" value="P:ribosomal small subunit biogenesis"/>
    <property type="evidence" value="ECO:0007669"/>
    <property type="project" value="UniProtKB-UniRule"/>
</dbReference>
<dbReference type="CDD" id="cd01854">
    <property type="entry name" value="YjeQ_EngC"/>
    <property type="match status" value="1"/>
</dbReference>
<dbReference type="Gene3D" id="2.40.50.140">
    <property type="entry name" value="Nucleic acid-binding proteins"/>
    <property type="match status" value="1"/>
</dbReference>
<dbReference type="Gene3D" id="3.40.50.300">
    <property type="entry name" value="P-loop containing nucleotide triphosphate hydrolases"/>
    <property type="match status" value="1"/>
</dbReference>
<dbReference type="Gene3D" id="1.10.40.50">
    <property type="entry name" value="Probable gtpase engc, domain 3"/>
    <property type="match status" value="1"/>
</dbReference>
<dbReference type="HAMAP" id="MF_01820">
    <property type="entry name" value="GTPase_RsgA"/>
    <property type="match status" value="1"/>
</dbReference>
<dbReference type="InterPro" id="IPR030378">
    <property type="entry name" value="G_CP_dom"/>
</dbReference>
<dbReference type="InterPro" id="IPR012340">
    <property type="entry name" value="NA-bd_OB-fold"/>
</dbReference>
<dbReference type="InterPro" id="IPR027417">
    <property type="entry name" value="P-loop_NTPase"/>
</dbReference>
<dbReference type="InterPro" id="IPR004881">
    <property type="entry name" value="Ribosome_biogen_GTPase_RsgA"/>
</dbReference>
<dbReference type="InterPro" id="IPR010914">
    <property type="entry name" value="RsgA_GTPase_dom"/>
</dbReference>
<dbReference type="NCBIfam" id="NF008931">
    <property type="entry name" value="PRK12288.1"/>
    <property type="match status" value="1"/>
</dbReference>
<dbReference type="NCBIfam" id="TIGR00157">
    <property type="entry name" value="ribosome small subunit-dependent GTPase A"/>
    <property type="match status" value="1"/>
</dbReference>
<dbReference type="PANTHER" id="PTHR32120">
    <property type="entry name" value="SMALL RIBOSOMAL SUBUNIT BIOGENESIS GTPASE RSGA"/>
    <property type="match status" value="1"/>
</dbReference>
<dbReference type="PANTHER" id="PTHR32120:SF11">
    <property type="entry name" value="SMALL RIBOSOMAL SUBUNIT BIOGENESIS GTPASE RSGA 1, MITOCHONDRIAL-RELATED"/>
    <property type="match status" value="1"/>
</dbReference>
<dbReference type="Pfam" id="PF03193">
    <property type="entry name" value="RsgA_GTPase"/>
    <property type="match status" value="1"/>
</dbReference>
<dbReference type="SUPFAM" id="SSF52540">
    <property type="entry name" value="P-loop containing nucleoside triphosphate hydrolases"/>
    <property type="match status" value="1"/>
</dbReference>
<dbReference type="PROSITE" id="PS50936">
    <property type="entry name" value="ENGC_GTPASE"/>
    <property type="match status" value="1"/>
</dbReference>
<dbReference type="PROSITE" id="PS51721">
    <property type="entry name" value="G_CP"/>
    <property type="match status" value="1"/>
</dbReference>
<proteinExistence type="inferred from homology"/>
<feature type="chain" id="PRO_1000188159" description="Small ribosomal subunit biogenesis GTPase RsgA">
    <location>
        <begin position="1"/>
        <end position="350"/>
    </location>
</feature>
<feature type="domain" description="CP-type G" evidence="2">
    <location>
        <begin position="103"/>
        <end position="273"/>
    </location>
</feature>
<feature type="region of interest" description="Disordered" evidence="3">
    <location>
        <begin position="1"/>
        <end position="35"/>
    </location>
</feature>
<feature type="compositionally biased region" description="Polar residues" evidence="3">
    <location>
        <begin position="1"/>
        <end position="17"/>
    </location>
</feature>
<feature type="binding site" evidence="1">
    <location>
        <begin position="159"/>
        <end position="162"/>
    </location>
    <ligand>
        <name>GTP</name>
        <dbReference type="ChEBI" id="CHEBI:37565"/>
    </ligand>
</feature>
<feature type="binding site" evidence="1">
    <location>
        <begin position="213"/>
        <end position="221"/>
    </location>
    <ligand>
        <name>GTP</name>
        <dbReference type="ChEBI" id="CHEBI:37565"/>
    </ligand>
</feature>
<feature type="binding site" evidence="1">
    <location>
        <position position="297"/>
    </location>
    <ligand>
        <name>Zn(2+)</name>
        <dbReference type="ChEBI" id="CHEBI:29105"/>
    </ligand>
</feature>
<feature type="binding site" evidence="1">
    <location>
        <position position="302"/>
    </location>
    <ligand>
        <name>Zn(2+)</name>
        <dbReference type="ChEBI" id="CHEBI:29105"/>
    </ligand>
</feature>
<feature type="binding site" evidence="1">
    <location>
        <position position="304"/>
    </location>
    <ligand>
        <name>Zn(2+)</name>
        <dbReference type="ChEBI" id="CHEBI:29105"/>
    </ligand>
</feature>
<feature type="binding site" evidence="1">
    <location>
        <position position="310"/>
    </location>
    <ligand>
        <name>Zn(2+)</name>
        <dbReference type="ChEBI" id="CHEBI:29105"/>
    </ligand>
</feature>
<sequence>MSKNKLSKGQQRRVQANHQRRLRTDRKPELDDSQLGDAQEGIVISRFGQHADVEAVDGTQHRCNIRRTIKSLVTGDRVVWRPGLQAQEGVRVKGIVEAVHERTSVLTRPDLYDGVKPIAANIDQIVIVSAILPELSLNIIDRYLVACETLEVEPLIVLNKIDLLDADGRKFVDGMMDIYRRIGYDVLEVSSQTREGMEAFENALTGRISIFAGQSGVGKSSLLNALLPPTDNEILVNTVSGNSGLGQHTTTAARLYHFQHGGDVIDSPGVREFGLWHLAPEQITQGFVEFRDYLGHCKFRDCSHTNDPGCALREAVEQGKIAEERFDNYHRILESMEQAKPRKTSDSDEK</sequence>
<comment type="function">
    <text evidence="1">One of several proteins that assist in the late maturation steps of the functional core of the 30S ribosomal subunit. Helps release RbfA from mature subunits. May play a role in the assembly of ribosomal proteins into the subunit. Circularly permuted GTPase that catalyzes slow GTP hydrolysis, GTPase activity is stimulated by the 30S ribosomal subunit.</text>
</comment>
<comment type="cofactor">
    <cofactor evidence="1">
        <name>Zn(2+)</name>
        <dbReference type="ChEBI" id="CHEBI:29105"/>
    </cofactor>
    <text evidence="1">Binds 1 zinc ion per subunit.</text>
</comment>
<comment type="subunit">
    <text evidence="1">Monomer. Associates with 30S ribosomal subunit, binds 16S rRNA.</text>
</comment>
<comment type="subcellular location">
    <subcellularLocation>
        <location evidence="1">Cytoplasm</location>
    </subcellularLocation>
</comment>
<comment type="similarity">
    <text evidence="1">Belongs to the TRAFAC class YlqF/YawG GTPase family. RsgA subfamily.</text>
</comment>
<gene>
    <name evidence="1" type="primary">rsgA</name>
    <name type="ordered locus">YPTS_0443</name>
</gene>
<protein>
    <recommendedName>
        <fullName evidence="1">Small ribosomal subunit biogenesis GTPase RsgA</fullName>
        <ecNumber evidence="1">3.6.1.-</ecNumber>
    </recommendedName>
</protein>
<evidence type="ECO:0000255" key="1">
    <source>
        <dbReference type="HAMAP-Rule" id="MF_01820"/>
    </source>
</evidence>
<evidence type="ECO:0000255" key="2">
    <source>
        <dbReference type="PROSITE-ProRule" id="PRU01058"/>
    </source>
</evidence>
<evidence type="ECO:0000256" key="3">
    <source>
        <dbReference type="SAM" id="MobiDB-lite"/>
    </source>
</evidence>
<accession>B2K1Z6</accession>